<feature type="initiator methionine" description="Removed" evidence="12 18">
    <location>
        <position position="1"/>
    </location>
</feature>
<feature type="chain" id="PRO_0000119746" description="Protein farnesyltransferase/geranylgeranyltransferase type-1 subunit alpha">
    <location>
        <begin position="2"/>
        <end position="379"/>
    </location>
</feature>
<feature type="repeat" description="PFTA 1">
    <location>
        <begin position="112"/>
        <end position="146"/>
    </location>
</feature>
<feature type="repeat" description="PFTA 2">
    <location>
        <begin position="147"/>
        <end position="180"/>
    </location>
</feature>
<feature type="repeat" description="PFTA 3">
    <location>
        <begin position="181"/>
        <end position="215"/>
    </location>
</feature>
<feature type="repeat" description="PFTA 4">
    <location>
        <begin position="216"/>
        <end position="249"/>
    </location>
</feature>
<feature type="repeat" description="PFTA 5">
    <location>
        <begin position="255"/>
        <end position="289"/>
    </location>
</feature>
<feature type="region of interest" description="Disordered" evidence="4">
    <location>
        <begin position="1"/>
        <end position="54"/>
    </location>
</feature>
<feature type="compositionally biased region" description="Pro residues" evidence="4">
    <location>
        <begin position="19"/>
        <end position="32"/>
    </location>
</feature>
<feature type="modified residue" description="N-acetylalanine" evidence="12 18">
    <location>
        <position position="2"/>
    </location>
</feature>
<feature type="modified residue" description="Phosphoserine" evidence="17 19">
    <location>
        <position position="373"/>
    </location>
</feature>
<feature type="splice variant" id="VSP_062522" description="In isoform 3." evidence="12">
    <location>
        <begin position="1"/>
        <end position="38"/>
    </location>
</feature>
<feature type="splice variant" id="VSP_036468" description="In isoform 2." evidence="15">
    <location>
        <begin position="68"/>
        <end position="134"/>
    </location>
</feature>
<feature type="mutagenesis site" description="Reduced activity." evidence="13">
    <original>K</original>
    <variation>N</variation>
    <location>
        <position position="164"/>
    </location>
</feature>
<feature type="mutagenesis site" description="Reduced catalytic efficiency." evidence="14">
    <original>N</original>
    <variation>K</variation>
    <location>
        <position position="199"/>
    </location>
</feature>
<feature type="sequence conflict" description="In Ref. 2." evidence="16" ref="2">
    <original>Y</original>
    <variation>H</variation>
    <location>
        <position position="241"/>
    </location>
</feature>
<feature type="helix" evidence="21">
    <location>
        <begin position="66"/>
        <end position="68"/>
    </location>
</feature>
<feature type="helix" evidence="21">
    <location>
        <begin position="70"/>
        <end position="72"/>
    </location>
</feature>
<feature type="strand" evidence="21">
    <location>
        <begin position="87"/>
        <end position="90"/>
    </location>
</feature>
<feature type="helix" evidence="21">
    <location>
        <begin position="94"/>
        <end position="109"/>
    </location>
</feature>
<feature type="helix" evidence="21">
    <location>
        <begin position="114"/>
        <end position="126"/>
    </location>
</feature>
<feature type="helix" evidence="21">
    <location>
        <begin position="131"/>
        <end position="143"/>
    </location>
</feature>
<feature type="helix" evidence="21">
    <location>
        <begin position="148"/>
        <end position="161"/>
    </location>
</feature>
<feature type="helix" evidence="21">
    <location>
        <begin position="166"/>
        <end position="179"/>
    </location>
</feature>
<feature type="helix" evidence="21">
    <location>
        <begin position="185"/>
        <end position="195"/>
    </location>
</feature>
<feature type="helix" evidence="21">
    <location>
        <begin position="200"/>
        <end position="213"/>
    </location>
</feature>
<feature type="helix" evidence="20">
    <location>
        <begin position="216"/>
        <end position="218"/>
    </location>
</feature>
<feature type="helix" evidence="21">
    <location>
        <begin position="219"/>
        <end position="229"/>
    </location>
</feature>
<feature type="helix" evidence="21">
    <location>
        <begin position="234"/>
        <end position="246"/>
    </location>
</feature>
<feature type="helix" evidence="21">
    <location>
        <begin position="253"/>
        <end position="269"/>
    </location>
</feature>
<feature type="helix" evidence="21">
    <location>
        <begin position="274"/>
        <end position="284"/>
    </location>
</feature>
<feature type="turn" evidence="21">
    <location>
        <begin position="285"/>
        <end position="287"/>
    </location>
</feature>
<feature type="helix" evidence="21">
    <location>
        <begin position="289"/>
        <end position="291"/>
    </location>
</feature>
<feature type="helix" evidence="21">
    <location>
        <begin position="293"/>
        <end position="302"/>
    </location>
</feature>
<feature type="turn" evidence="21">
    <location>
        <begin position="303"/>
        <end position="305"/>
    </location>
</feature>
<feature type="helix" evidence="21">
    <location>
        <begin position="309"/>
        <end position="324"/>
    </location>
</feature>
<feature type="helix" evidence="21">
    <location>
        <begin position="330"/>
        <end position="346"/>
    </location>
</feature>
<feature type="helix" evidence="21">
    <location>
        <begin position="350"/>
        <end position="352"/>
    </location>
</feature>
<feature type="helix" evidence="21">
    <location>
        <begin position="353"/>
        <end position="367"/>
    </location>
</feature>
<feature type="initiator methionine" description="Removed" evidence="12">
    <location sequence="P49354-3">
        <position position="1"/>
    </location>
</feature>
<feature type="modified residue" description="N-acetylalanine" evidence="12">
    <location sequence="P49354-3">
        <position position="2"/>
    </location>
</feature>
<dbReference type="EC" id="2.5.1.58" evidence="6 7 10 11 13 14"/>
<dbReference type="EC" id="2.5.1.59" evidence="10"/>
<dbReference type="EMBL" id="L10413">
    <property type="protein sequence ID" value="AAA86285.1"/>
    <property type="molecule type" value="mRNA"/>
</dbReference>
<dbReference type="EMBL" id="L00634">
    <property type="protein sequence ID" value="AAA35853.1"/>
    <property type="molecule type" value="mRNA"/>
</dbReference>
<dbReference type="EMBL" id="AC110275">
    <property type="status" value="NOT_ANNOTATED_CDS"/>
    <property type="molecule type" value="Genomic_DNA"/>
</dbReference>
<dbReference type="EMBL" id="BT009854">
    <property type="protein sequence ID" value="AAP88856.1"/>
    <property type="molecule type" value="mRNA"/>
</dbReference>
<dbReference type="EMBL" id="AK292121">
    <property type="protein sequence ID" value="BAF84810.1"/>
    <property type="molecule type" value="mRNA"/>
</dbReference>
<dbReference type="EMBL" id="AC113191">
    <property type="status" value="NOT_ANNOTATED_CDS"/>
    <property type="molecule type" value="Genomic_DNA"/>
</dbReference>
<dbReference type="EMBL" id="BC017029">
    <property type="protein sequence ID" value="AAH17029.2"/>
    <property type="molecule type" value="mRNA"/>
</dbReference>
<dbReference type="EMBL" id="BC084566">
    <property type="protein sequence ID" value="AAH84566.1"/>
    <property type="molecule type" value="mRNA"/>
</dbReference>
<dbReference type="EMBL" id="AL698961">
    <property type="status" value="NOT_ANNOTATED_CDS"/>
    <property type="molecule type" value="mRNA"/>
</dbReference>
<dbReference type="CCDS" id="CCDS6140.1">
    <molecule id="P49354-1"/>
</dbReference>
<dbReference type="PIR" id="A47659">
    <property type="entry name" value="A47659"/>
</dbReference>
<dbReference type="RefSeq" id="NP_002018.1">
    <molecule id="P49354-1"/>
    <property type="nucleotide sequence ID" value="NM_002027.3"/>
</dbReference>
<dbReference type="PDB" id="1JCQ">
    <property type="method" value="X-ray"/>
    <property type="resolution" value="2.30 A"/>
    <property type="chains" value="A=1-379"/>
</dbReference>
<dbReference type="PDB" id="1LD7">
    <property type="method" value="X-ray"/>
    <property type="resolution" value="2.00 A"/>
    <property type="chains" value="A=1-379"/>
</dbReference>
<dbReference type="PDB" id="1LD8">
    <property type="method" value="X-ray"/>
    <property type="resolution" value="1.80 A"/>
    <property type="chains" value="A=1-379"/>
</dbReference>
<dbReference type="PDB" id="1MZC">
    <property type="method" value="X-ray"/>
    <property type="resolution" value="2.00 A"/>
    <property type="chains" value="A=1-379"/>
</dbReference>
<dbReference type="PDB" id="1S63">
    <property type="method" value="X-ray"/>
    <property type="resolution" value="1.90 A"/>
    <property type="chains" value="A=1-379"/>
</dbReference>
<dbReference type="PDB" id="1SA4">
    <property type="method" value="X-ray"/>
    <property type="resolution" value="2.10 A"/>
    <property type="chains" value="A=1-379"/>
</dbReference>
<dbReference type="PDB" id="1TN6">
    <property type="method" value="X-ray"/>
    <property type="resolution" value="1.80 A"/>
    <property type="chains" value="A=1-379"/>
</dbReference>
<dbReference type="PDB" id="2F0Y">
    <property type="method" value="X-ray"/>
    <property type="resolution" value="2.70 A"/>
    <property type="chains" value="A=1-379"/>
</dbReference>
<dbReference type="PDB" id="2H6F">
    <property type="method" value="X-ray"/>
    <property type="resolution" value="1.50 A"/>
    <property type="chains" value="A=1-379"/>
</dbReference>
<dbReference type="PDB" id="2H6G">
    <property type="method" value="X-ray"/>
    <property type="resolution" value="1.85 A"/>
    <property type="chains" value="A=1-379"/>
</dbReference>
<dbReference type="PDB" id="2H6H">
    <property type="method" value="X-ray"/>
    <property type="resolution" value="1.80 A"/>
    <property type="chains" value="A=1-379"/>
</dbReference>
<dbReference type="PDB" id="2H6I">
    <property type="method" value="X-ray"/>
    <property type="resolution" value="3.00 A"/>
    <property type="chains" value="A=1-379"/>
</dbReference>
<dbReference type="PDB" id="2IEJ">
    <property type="method" value="X-ray"/>
    <property type="resolution" value="1.80 A"/>
    <property type="chains" value="A=1-379"/>
</dbReference>
<dbReference type="PDB" id="3E37">
    <property type="method" value="X-ray"/>
    <property type="resolution" value="1.80 A"/>
    <property type="chains" value="A=1-379"/>
</dbReference>
<dbReference type="PDBsum" id="1JCQ"/>
<dbReference type="PDBsum" id="1LD7"/>
<dbReference type="PDBsum" id="1LD8"/>
<dbReference type="PDBsum" id="1MZC"/>
<dbReference type="PDBsum" id="1S63"/>
<dbReference type="PDBsum" id="1SA4"/>
<dbReference type="PDBsum" id="1TN6"/>
<dbReference type="PDBsum" id="2F0Y"/>
<dbReference type="PDBsum" id="2H6F"/>
<dbReference type="PDBsum" id="2H6G"/>
<dbReference type="PDBsum" id="2H6H"/>
<dbReference type="PDBsum" id="2H6I"/>
<dbReference type="PDBsum" id="2IEJ"/>
<dbReference type="PDBsum" id="3E37"/>
<dbReference type="SMR" id="P49354"/>
<dbReference type="BioGRID" id="108625">
    <property type="interactions" value="101"/>
</dbReference>
<dbReference type="ComplexPortal" id="CPX-2157">
    <property type="entry name" value="Protein geranylgeranyl transferase type I complex"/>
</dbReference>
<dbReference type="ComplexPortal" id="CPX-2165">
    <property type="entry name" value="Protein farnesyltransferase complex"/>
</dbReference>
<dbReference type="CORUM" id="P49354"/>
<dbReference type="FunCoup" id="P49354">
    <property type="interactions" value="2409"/>
</dbReference>
<dbReference type="IntAct" id="P49354">
    <property type="interactions" value="59"/>
</dbReference>
<dbReference type="MINT" id="P49354"/>
<dbReference type="STRING" id="9606.ENSP00000303423"/>
<dbReference type="BindingDB" id="P49354"/>
<dbReference type="ChEMBL" id="CHEMBL271"/>
<dbReference type="DrugBank" id="DB07216">
    <property type="generic name" value="(11S)-8-CHLORO-11-[1-(METHYLSULFONYL)PIPERIDIN-4-YL]-6-PIPERAZIN-1-YL-11H-BENZO[5,6]CYCLOHEPTA[1,2-B]PYRIDINE"/>
</dbReference>
<dbReference type="DrugBank" id="DB08674">
    <property type="generic name" value="(20S)-19,20,21,22-TETRAHYDRO-19-OXO-5H-18,20-ETHANO-12,14-ETHENO-6,10-METHENO-18H-BENZ[D]IMIDAZO[4,3-K][1,6,9,12]OXATRIAZA-CYCLOOCTADECOSINE-9-CARBONITRILE"/>
</dbReference>
<dbReference type="DrugBank" id="DB08676">
    <property type="generic name" value="(20S)-19,20,22,23-TETRAHYDRO-19-OXO-5H,21H-18,20-ETHANO-12,14-ETHENO-6,10-METHENOBENZ[D]IMIDAZO[4,3-L][1,6,9,13]OXATRIAZACYCLONOADECOSINE-9-CARBONITRILE"/>
</dbReference>
<dbReference type="DrugBank" id="DB08180">
    <property type="generic name" value="2-[METHYL-(5-GERANYL-4-METHYL-PENT-3-ENYL)-AMINO]-ETHYL-DIPHOSPHATE"/>
</dbReference>
<dbReference type="DrugBank" id="DB06953">
    <property type="generic name" value="2-CHLORO-5-(3-CHLORO-PHENYL)-6-[(4-CYANO-PHENYL)-(3-METHYL-3H-IMIDAZOL-4-YL)- METHOXYMETHYL]-NICOTINONITRILE"/>
</dbReference>
<dbReference type="DrugBank" id="DB07771">
    <property type="generic name" value="[(3,7,11-TRIMETHYL-DODECA-2,6,10-TRIENYLOXYCARBAMOYL)-METHYL]-PHOSPHONIC ACID"/>
</dbReference>
<dbReference type="DrugBank" id="DB07895">
    <property type="generic name" value="ALPHA-HYDROXYFARNESYLPHOSPHONIC ACID"/>
</dbReference>
<dbReference type="DrugBank" id="DB04893">
    <property type="generic name" value="AZD3409"/>
</dbReference>
<dbReference type="DrugBank" id="DB12234">
    <property type="generic name" value="BMS-214662"/>
</dbReference>
<dbReference type="DrugBank" id="DB07780">
    <property type="generic name" value="Farnesyl diphosphate"/>
</dbReference>
<dbReference type="DrugBank" id="DB07841">
    <property type="generic name" value="Geranylgeranyl diphosphate"/>
</dbReference>
<dbReference type="DrugBank" id="DB07227">
    <property type="generic name" value="L-778123"/>
</dbReference>
<dbReference type="DrugBank" id="DB06448">
    <property type="generic name" value="Lonafarnib"/>
</dbReference>
<dbReference type="DrugBank" id="DB18125">
    <property type="generic name" value="PTX-100"/>
</dbReference>
<dbReference type="DrugBank" id="DB04960">
    <property type="generic name" value="Tipifarnib"/>
</dbReference>
<dbReference type="DrugCentral" id="P49354"/>
<dbReference type="iPTMnet" id="P49354"/>
<dbReference type="MetOSite" id="P49354"/>
<dbReference type="PhosphoSitePlus" id="P49354"/>
<dbReference type="SwissPalm" id="P49354"/>
<dbReference type="BioMuta" id="FNTA"/>
<dbReference type="DMDM" id="1346694"/>
<dbReference type="jPOST" id="P49354"/>
<dbReference type="MassIVE" id="P49354"/>
<dbReference type="PaxDb" id="9606-ENSP00000303423"/>
<dbReference type="PeptideAtlas" id="P49354"/>
<dbReference type="ProteomicsDB" id="55993">
    <molecule id="P49354-1"/>
</dbReference>
<dbReference type="ProteomicsDB" id="55994">
    <molecule id="P49354-2"/>
</dbReference>
<dbReference type="Pumba" id="P49354"/>
<dbReference type="Antibodypedia" id="1067">
    <property type="antibodies" value="306 antibodies from 33 providers"/>
</dbReference>
<dbReference type="DNASU" id="2339"/>
<dbReference type="Ensembl" id="ENST00000302279.8">
    <molecule id="P49354-1"/>
    <property type="protein sequence ID" value="ENSP00000303423.3"/>
    <property type="gene ID" value="ENSG00000168522.13"/>
</dbReference>
<dbReference type="GeneID" id="2339"/>
<dbReference type="KEGG" id="hsa:2339"/>
<dbReference type="MANE-Select" id="ENST00000302279.8">
    <property type="protein sequence ID" value="ENSP00000303423.3"/>
    <property type="RefSeq nucleotide sequence ID" value="NM_002027.3"/>
    <property type="RefSeq protein sequence ID" value="NP_002018.1"/>
</dbReference>
<dbReference type="UCSC" id="uc003xps.5">
    <molecule id="P49354-1"/>
    <property type="organism name" value="human"/>
</dbReference>
<dbReference type="AGR" id="HGNC:3782"/>
<dbReference type="CTD" id="2339"/>
<dbReference type="DisGeNET" id="2339"/>
<dbReference type="GeneCards" id="FNTA"/>
<dbReference type="HGNC" id="HGNC:3782">
    <property type="gene designation" value="FNTA"/>
</dbReference>
<dbReference type="HPA" id="ENSG00000168522">
    <property type="expression patterns" value="Low tissue specificity"/>
</dbReference>
<dbReference type="MIM" id="134635">
    <property type="type" value="gene"/>
</dbReference>
<dbReference type="neXtProt" id="NX_P49354"/>
<dbReference type="OpenTargets" id="ENSG00000168522"/>
<dbReference type="PharmGKB" id="PA28199"/>
<dbReference type="VEuPathDB" id="HostDB:ENSG00000168522"/>
<dbReference type="eggNOG" id="KOG0530">
    <property type="taxonomic scope" value="Eukaryota"/>
</dbReference>
<dbReference type="GeneTree" id="ENSGT00550000074935"/>
<dbReference type="HOGENOM" id="CLU_026582_1_1_1"/>
<dbReference type="InParanoid" id="P49354"/>
<dbReference type="OMA" id="WAIRTFN"/>
<dbReference type="OrthoDB" id="272289at2759"/>
<dbReference type="PAN-GO" id="P49354">
    <property type="GO annotations" value="7 GO annotations based on evolutionary models"/>
</dbReference>
<dbReference type="PhylomeDB" id="P49354"/>
<dbReference type="TreeFam" id="TF313038"/>
<dbReference type="BRENDA" id="2.5.1.58">
    <property type="organism ID" value="2681"/>
</dbReference>
<dbReference type="BRENDA" id="2.5.1.59">
    <property type="organism ID" value="2681"/>
</dbReference>
<dbReference type="PathwayCommons" id="P49354"/>
<dbReference type="Reactome" id="R-HSA-111465">
    <property type="pathway name" value="Apoptotic cleavage of cellular proteins"/>
</dbReference>
<dbReference type="Reactome" id="R-HSA-2514859">
    <property type="pathway name" value="Inactivation, recovery and regulation of the phototransduction cascade"/>
</dbReference>
<dbReference type="Reactome" id="R-HSA-9648002">
    <property type="pathway name" value="RAS processing"/>
</dbReference>
<dbReference type="Reactome" id="R-HSA-9679191">
    <property type="pathway name" value="Potential therapeutics for SARS"/>
</dbReference>
<dbReference type="SignaLink" id="P49354"/>
<dbReference type="SIGNOR" id="P49354"/>
<dbReference type="BioGRID-ORCS" id="2339">
    <property type="hits" value="612 hits in 1155 CRISPR screens"/>
</dbReference>
<dbReference type="ChiTaRS" id="FNTA">
    <property type="organism name" value="human"/>
</dbReference>
<dbReference type="EvolutionaryTrace" id="P49354"/>
<dbReference type="GeneWiki" id="FNTA"/>
<dbReference type="GenomeRNAi" id="2339"/>
<dbReference type="Pharos" id="P49354">
    <property type="development level" value="Tclin"/>
</dbReference>
<dbReference type="PRO" id="PR:P49354"/>
<dbReference type="Proteomes" id="UP000005640">
    <property type="component" value="Chromosome 8"/>
</dbReference>
<dbReference type="RNAct" id="P49354">
    <property type="molecule type" value="protein"/>
</dbReference>
<dbReference type="Bgee" id="ENSG00000168522">
    <property type="expression patterns" value="Expressed in esophagus squamous epithelium and 215 other cell types or tissues"/>
</dbReference>
<dbReference type="ExpressionAtlas" id="P49354">
    <property type="expression patterns" value="baseline and differential"/>
</dbReference>
<dbReference type="GO" id="GO:0005953">
    <property type="term" value="C:CAAX-protein geranylgeranyltransferase complex"/>
    <property type="evidence" value="ECO:0000314"/>
    <property type="project" value="UniProtKB"/>
</dbReference>
<dbReference type="GO" id="GO:0005737">
    <property type="term" value="C:cytoplasm"/>
    <property type="evidence" value="ECO:0000318"/>
    <property type="project" value="GO_Central"/>
</dbReference>
<dbReference type="GO" id="GO:0005829">
    <property type="term" value="C:cytosol"/>
    <property type="evidence" value="ECO:0000304"/>
    <property type="project" value="Reactome"/>
</dbReference>
<dbReference type="GO" id="GO:0005875">
    <property type="term" value="C:microtubule associated complex"/>
    <property type="evidence" value="ECO:0000314"/>
    <property type="project" value="BHF-UCL"/>
</dbReference>
<dbReference type="GO" id="GO:0005886">
    <property type="term" value="C:plasma membrane"/>
    <property type="evidence" value="ECO:0007669"/>
    <property type="project" value="GOC"/>
</dbReference>
<dbReference type="GO" id="GO:0005965">
    <property type="term" value="C:protein farnesyltransferase complex"/>
    <property type="evidence" value="ECO:0000314"/>
    <property type="project" value="UniProtKB"/>
</dbReference>
<dbReference type="GO" id="GO:0010698">
    <property type="term" value="F:acetyltransferase activator activity"/>
    <property type="evidence" value="ECO:0000314"/>
    <property type="project" value="BHF-UCL"/>
</dbReference>
<dbReference type="GO" id="GO:0043014">
    <property type="term" value="F:alpha-tubulin binding"/>
    <property type="evidence" value="ECO:0000314"/>
    <property type="project" value="BHF-UCL"/>
</dbReference>
<dbReference type="GO" id="GO:0004662">
    <property type="term" value="F:CAAX-protein geranylgeranyltransferase activity"/>
    <property type="evidence" value="ECO:0007669"/>
    <property type="project" value="UniProtKB-EC"/>
</dbReference>
<dbReference type="GO" id="GO:0019899">
    <property type="term" value="F:enzyme binding"/>
    <property type="evidence" value="ECO:0000353"/>
    <property type="project" value="BHF-UCL"/>
</dbReference>
<dbReference type="GO" id="GO:0008017">
    <property type="term" value="F:microtubule binding"/>
    <property type="evidence" value="ECO:0000314"/>
    <property type="project" value="BHF-UCL"/>
</dbReference>
<dbReference type="GO" id="GO:0060090">
    <property type="term" value="F:molecular adaptor activity"/>
    <property type="evidence" value="ECO:0000269"/>
    <property type="project" value="DisProt"/>
</dbReference>
<dbReference type="GO" id="GO:0004660">
    <property type="term" value="F:protein farnesyltransferase activity"/>
    <property type="evidence" value="ECO:0000314"/>
    <property type="project" value="UniProtKB"/>
</dbReference>
<dbReference type="GO" id="GO:0004661">
    <property type="term" value="F:protein geranylgeranyltransferase activity"/>
    <property type="evidence" value="ECO:0000314"/>
    <property type="project" value="UniProtKB"/>
</dbReference>
<dbReference type="GO" id="GO:0004663">
    <property type="term" value="F:Rab geranylgeranyltransferase activity"/>
    <property type="evidence" value="ECO:0007669"/>
    <property type="project" value="Ensembl"/>
</dbReference>
<dbReference type="GO" id="GO:0030971">
    <property type="term" value="F:receptor tyrosine kinase binding"/>
    <property type="evidence" value="ECO:0007669"/>
    <property type="project" value="Ensembl"/>
</dbReference>
<dbReference type="GO" id="GO:0007323">
    <property type="term" value="P:peptide pheromone maturation"/>
    <property type="evidence" value="ECO:0000318"/>
    <property type="project" value="GO_Central"/>
</dbReference>
<dbReference type="GO" id="GO:0035022">
    <property type="term" value="P:positive regulation of Rac protein signal transduction"/>
    <property type="evidence" value="ECO:0007669"/>
    <property type="project" value="Ensembl"/>
</dbReference>
<dbReference type="GO" id="GO:1904395">
    <property type="term" value="P:positive regulation of skeletal muscle acetylcholine-gated channel clustering"/>
    <property type="evidence" value="ECO:0007669"/>
    <property type="project" value="Ensembl"/>
</dbReference>
<dbReference type="GO" id="GO:0018343">
    <property type="term" value="P:protein farnesylation"/>
    <property type="evidence" value="ECO:0000314"/>
    <property type="project" value="UniProtKB"/>
</dbReference>
<dbReference type="GO" id="GO:0018344">
    <property type="term" value="P:protein geranylgeranylation"/>
    <property type="evidence" value="ECO:0000314"/>
    <property type="project" value="UniProtKB"/>
</dbReference>
<dbReference type="GO" id="GO:0060632">
    <property type="term" value="P:regulation of microtubule-based movement"/>
    <property type="evidence" value="ECO:0000314"/>
    <property type="project" value="BHF-UCL"/>
</dbReference>
<dbReference type="GO" id="GO:0071340">
    <property type="term" value="P:skeletal muscle acetylcholine-gated channel clustering"/>
    <property type="evidence" value="ECO:0007669"/>
    <property type="project" value="Ensembl"/>
</dbReference>
<dbReference type="GO" id="GO:0007179">
    <property type="term" value="P:transforming growth factor beta receptor signaling pathway"/>
    <property type="evidence" value="ECO:0000304"/>
    <property type="project" value="ProtInc"/>
</dbReference>
<dbReference type="DisProt" id="DP00558"/>
<dbReference type="FunFam" id="1.25.40.120:FF:000002">
    <property type="entry name" value="Protein farnesyltransferase/geranylgeranyltransferase type-1 subunit alpha"/>
    <property type="match status" value="1"/>
</dbReference>
<dbReference type="Gene3D" id="1.25.40.120">
    <property type="entry name" value="Protein prenylyltransferase"/>
    <property type="match status" value="1"/>
</dbReference>
<dbReference type="InterPro" id="IPR002088">
    <property type="entry name" value="Prenyl_trans_a"/>
</dbReference>
<dbReference type="PANTHER" id="PTHR11129">
    <property type="entry name" value="PROTEIN FARNESYLTRANSFERASE ALPHA SUBUNIT/RAB GERANYLGERANYL TRANSFERASE ALPHA SUBUNIT"/>
    <property type="match status" value="1"/>
</dbReference>
<dbReference type="PANTHER" id="PTHR11129:SF5">
    <property type="entry name" value="PROTEIN FARNESYLTRANSFERASE_GERANYLGERANYLTRANSFERASE TYPE-1 SUBUNIT ALPHA"/>
    <property type="match status" value="1"/>
</dbReference>
<dbReference type="Pfam" id="PF01239">
    <property type="entry name" value="PPTA"/>
    <property type="match status" value="5"/>
</dbReference>
<dbReference type="SUPFAM" id="SSF48439">
    <property type="entry name" value="Protein prenylyltransferase"/>
    <property type="match status" value="1"/>
</dbReference>
<dbReference type="PROSITE" id="PS51147">
    <property type="entry name" value="PFTA"/>
    <property type="match status" value="5"/>
</dbReference>
<sequence length="379" mass="44409">MAATEGVGEAAQGGEPGQPAQPPPQPHPPPPQQQHKEEMAAEAGEAVASPMDDGFVSLDSPSYVLYRDRAEWADIDPVPQNDGPNPVVQIIYSDKFRDVYDYFRAVLQRDERSERAFKLTRDAIELNAANYTVWHFRRVLLKSLQKDLHEEMNYITAIIEEQPKNYQVWHHRRVLVEWLRDPSQELEFIADILNQDAKNYHAWQHRQWVIQEFKLWDNELQYVDQLLKEDVRNNSVWNQRYFVISNTTGYNDRAVLEREVQYTLEMIKLVPHNESAWNYLKGILQDRGLSKYPNLLNQLLDLQPSHSSPYLIAFLVDIYEDMLENQCDNKEDILNKALELCEILAKEKDTIRKEYWRYIGRSLQSKHSTENDSPTNVQQ</sequence>
<reference key="1">
    <citation type="journal article" date="1993" name="Genomics">
        <title>cDNA cloning of the two subunits of human CAAX farnesyltransferase and chromosomal mapping of FNTA and FNTB loci and related sequences.</title>
        <authorList>
            <person name="Andres D.A."/>
            <person name="Milatovich A."/>
            <person name="Ozcelik T."/>
            <person name="Wenzlau J.M."/>
            <person name="Brown M.S."/>
            <person name="Goldstein J.L."/>
            <person name="Francke U."/>
        </authorList>
    </citation>
    <scope>NUCLEOTIDE SEQUENCE [MRNA] (ISOFORM 1)</scope>
    <source>
        <tissue>Retina</tissue>
    </source>
</reference>
<reference key="2">
    <citation type="journal article" date="1993" name="J. Biol. Chem.">
        <title>Mutational analysis of alpha-subunit of protein farnesyltransferase. Evidence for a catalytic role.</title>
        <authorList>
            <person name="Andres D.A."/>
            <person name="Goldstein J.L."/>
            <person name="Ho Y.K."/>
            <person name="Brown M.S."/>
        </authorList>
    </citation>
    <scope>NUCLEOTIDE SEQUENCE [MRNA] (ISOFORM 1)</scope>
    <scope>MUTAGENESIS OF LYS-164</scope>
    <scope>FUNCTION</scope>
    <scope>CATALYTIC ACTIVITY</scope>
    <scope>SUBUNIT</scope>
</reference>
<reference key="3">
    <citation type="journal article" date="1993" name="Biochemistry">
        <title>Characterization of recombinant human farnesyl-protein transferase: cloning, expression, farnesyl diphosphate binding, and functional homology with yeast prenyl-protein transferases.</title>
        <authorList>
            <person name="Omer C.A."/>
            <person name="Kral A.M."/>
            <person name="Diehl R.E."/>
            <person name="Prendergast G.C."/>
            <person name="Powers S."/>
            <person name="Allen C.M."/>
            <person name="Gibbs J.B."/>
            <person name="Kohl N.E."/>
        </authorList>
    </citation>
    <scope>NUCLEOTIDE SEQUENCE [MRNA] (ISOFORM 1)</scope>
    <scope>MUTAGENESIS OF ASN-199</scope>
    <scope>CATALYTIC ACTIVITY</scope>
    <scope>FUNCTION</scope>
    <source>
        <tissue>Placenta</tissue>
    </source>
</reference>
<reference key="4">
    <citation type="submission" date="2003-08" db="EMBL/GenBank/DDBJ databases">
        <title>Cloning of human full-length CDSs in BD Creator(TM) system donor vector.</title>
        <authorList>
            <person name="Kalnine N."/>
            <person name="Chen X."/>
            <person name="Rolfs A."/>
            <person name="Halleck A."/>
            <person name="Hines L."/>
            <person name="Eisenstein S."/>
            <person name="Koundinya M."/>
            <person name="Raphael J."/>
            <person name="Moreira D."/>
            <person name="Kelley T."/>
            <person name="LaBaer J."/>
            <person name="Lin Y."/>
            <person name="Phelan M."/>
            <person name="Farmer A."/>
        </authorList>
    </citation>
    <scope>NUCLEOTIDE SEQUENCE [LARGE SCALE MRNA] (ISOFORM 1)</scope>
</reference>
<reference key="5">
    <citation type="journal article" date="2004" name="Nat. Genet.">
        <title>Complete sequencing and characterization of 21,243 full-length human cDNAs.</title>
        <authorList>
            <person name="Ota T."/>
            <person name="Suzuki Y."/>
            <person name="Nishikawa T."/>
            <person name="Otsuki T."/>
            <person name="Sugiyama T."/>
            <person name="Irie R."/>
            <person name="Wakamatsu A."/>
            <person name="Hayashi K."/>
            <person name="Sato H."/>
            <person name="Nagai K."/>
            <person name="Kimura K."/>
            <person name="Makita H."/>
            <person name="Sekine M."/>
            <person name="Obayashi M."/>
            <person name="Nishi T."/>
            <person name="Shibahara T."/>
            <person name="Tanaka T."/>
            <person name="Ishii S."/>
            <person name="Yamamoto J."/>
            <person name="Saito K."/>
            <person name="Kawai Y."/>
            <person name="Isono Y."/>
            <person name="Nakamura Y."/>
            <person name="Nagahari K."/>
            <person name="Murakami K."/>
            <person name="Yasuda T."/>
            <person name="Iwayanagi T."/>
            <person name="Wagatsuma M."/>
            <person name="Shiratori A."/>
            <person name="Sudo H."/>
            <person name="Hosoiri T."/>
            <person name="Kaku Y."/>
            <person name="Kodaira H."/>
            <person name="Kondo H."/>
            <person name="Sugawara M."/>
            <person name="Takahashi M."/>
            <person name="Kanda K."/>
            <person name="Yokoi T."/>
            <person name="Furuya T."/>
            <person name="Kikkawa E."/>
            <person name="Omura Y."/>
            <person name="Abe K."/>
            <person name="Kamihara K."/>
            <person name="Katsuta N."/>
            <person name="Sato K."/>
            <person name="Tanikawa M."/>
            <person name="Yamazaki M."/>
            <person name="Ninomiya K."/>
            <person name="Ishibashi T."/>
            <person name="Yamashita H."/>
            <person name="Murakawa K."/>
            <person name="Fujimori K."/>
            <person name="Tanai H."/>
            <person name="Kimata M."/>
            <person name="Watanabe M."/>
            <person name="Hiraoka S."/>
            <person name="Chiba Y."/>
            <person name="Ishida S."/>
            <person name="Ono Y."/>
            <person name="Takiguchi S."/>
            <person name="Watanabe S."/>
            <person name="Yosida M."/>
            <person name="Hotuta T."/>
            <person name="Kusano J."/>
            <person name="Kanehori K."/>
            <person name="Takahashi-Fujii A."/>
            <person name="Hara H."/>
            <person name="Tanase T.-O."/>
            <person name="Nomura Y."/>
            <person name="Togiya S."/>
            <person name="Komai F."/>
            <person name="Hara R."/>
            <person name="Takeuchi K."/>
            <person name="Arita M."/>
            <person name="Imose N."/>
            <person name="Musashino K."/>
            <person name="Yuuki H."/>
            <person name="Oshima A."/>
            <person name="Sasaki N."/>
            <person name="Aotsuka S."/>
            <person name="Yoshikawa Y."/>
            <person name="Matsunawa H."/>
            <person name="Ichihara T."/>
            <person name="Shiohata N."/>
            <person name="Sano S."/>
            <person name="Moriya S."/>
            <person name="Momiyama H."/>
            <person name="Satoh N."/>
            <person name="Takami S."/>
            <person name="Terashima Y."/>
            <person name="Suzuki O."/>
            <person name="Nakagawa S."/>
            <person name="Senoh A."/>
            <person name="Mizoguchi H."/>
            <person name="Goto Y."/>
            <person name="Shimizu F."/>
            <person name="Wakebe H."/>
            <person name="Hishigaki H."/>
            <person name="Watanabe T."/>
            <person name="Sugiyama A."/>
            <person name="Takemoto M."/>
            <person name="Kawakami B."/>
            <person name="Yamazaki M."/>
            <person name="Watanabe K."/>
            <person name="Kumagai A."/>
            <person name="Itakura S."/>
            <person name="Fukuzumi Y."/>
            <person name="Fujimori Y."/>
            <person name="Komiyama M."/>
            <person name="Tashiro H."/>
            <person name="Tanigami A."/>
            <person name="Fujiwara T."/>
            <person name="Ono T."/>
            <person name="Yamada K."/>
            <person name="Fujii Y."/>
            <person name="Ozaki K."/>
            <person name="Hirao M."/>
            <person name="Ohmori Y."/>
            <person name="Kawabata A."/>
            <person name="Hikiji T."/>
            <person name="Kobatake N."/>
            <person name="Inagaki H."/>
            <person name="Ikema Y."/>
            <person name="Okamoto S."/>
            <person name="Okitani R."/>
            <person name="Kawakami T."/>
            <person name="Noguchi S."/>
            <person name="Itoh T."/>
            <person name="Shigeta K."/>
            <person name="Senba T."/>
            <person name="Matsumura K."/>
            <person name="Nakajima Y."/>
            <person name="Mizuno T."/>
            <person name="Morinaga M."/>
            <person name="Sasaki M."/>
            <person name="Togashi T."/>
            <person name="Oyama M."/>
            <person name="Hata H."/>
            <person name="Watanabe M."/>
            <person name="Komatsu T."/>
            <person name="Mizushima-Sugano J."/>
            <person name="Satoh T."/>
            <person name="Shirai Y."/>
            <person name="Takahashi Y."/>
            <person name="Nakagawa K."/>
            <person name="Okumura K."/>
            <person name="Nagase T."/>
            <person name="Nomura N."/>
            <person name="Kikuchi H."/>
            <person name="Masuho Y."/>
            <person name="Yamashita R."/>
            <person name="Nakai K."/>
            <person name="Yada T."/>
            <person name="Nakamura Y."/>
            <person name="Ohara O."/>
            <person name="Isogai T."/>
            <person name="Sugano S."/>
        </authorList>
    </citation>
    <scope>NUCLEOTIDE SEQUENCE [LARGE SCALE MRNA] (ISOFORM 1)</scope>
    <source>
        <tissue>Synovium</tissue>
    </source>
</reference>
<reference key="6">
    <citation type="journal article" date="2006" name="Nature">
        <title>DNA sequence and analysis of human chromosome 8.</title>
        <authorList>
            <person name="Nusbaum C."/>
            <person name="Mikkelsen T.S."/>
            <person name="Zody M.C."/>
            <person name="Asakawa S."/>
            <person name="Taudien S."/>
            <person name="Garber M."/>
            <person name="Kodira C.D."/>
            <person name="Schueler M.G."/>
            <person name="Shimizu A."/>
            <person name="Whittaker C.A."/>
            <person name="Chang J.L."/>
            <person name="Cuomo C.A."/>
            <person name="Dewar K."/>
            <person name="FitzGerald M.G."/>
            <person name="Yang X."/>
            <person name="Allen N.R."/>
            <person name="Anderson S."/>
            <person name="Asakawa T."/>
            <person name="Blechschmidt K."/>
            <person name="Bloom T."/>
            <person name="Borowsky M.L."/>
            <person name="Butler J."/>
            <person name="Cook A."/>
            <person name="Corum B."/>
            <person name="DeArellano K."/>
            <person name="DeCaprio D."/>
            <person name="Dooley K.T."/>
            <person name="Dorris L. III"/>
            <person name="Engels R."/>
            <person name="Gloeckner G."/>
            <person name="Hafez N."/>
            <person name="Hagopian D.S."/>
            <person name="Hall J.L."/>
            <person name="Ishikawa S.K."/>
            <person name="Jaffe D.B."/>
            <person name="Kamat A."/>
            <person name="Kudoh J."/>
            <person name="Lehmann R."/>
            <person name="Lokitsang T."/>
            <person name="Macdonald P."/>
            <person name="Major J.E."/>
            <person name="Matthews C.D."/>
            <person name="Mauceli E."/>
            <person name="Menzel U."/>
            <person name="Mihalev A.H."/>
            <person name="Minoshima S."/>
            <person name="Murayama Y."/>
            <person name="Naylor J.W."/>
            <person name="Nicol R."/>
            <person name="Nguyen C."/>
            <person name="O'Leary S.B."/>
            <person name="O'Neill K."/>
            <person name="Parker S.C.J."/>
            <person name="Polley A."/>
            <person name="Raymond C.K."/>
            <person name="Reichwald K."/>
            <person name="Rodriguez J."/>
            <person name="Sasaki T."/>
            <person name="Schilhabel M."/>
            <person name="Siddiqui R."/>
            <person name="Smith C.L."/>
            <person name="Sneddon T.P."/>
            <person name="Talamas J.A."/>
            <person name="Tenzin P."/>
            <person name="Topham K."/>
            <person name="Venkataraman V."/>
            <person name="Wen G."/>
            <person name="Yamazaki S."/>
            <person name="Young S.K."/>
            <person name="Zeng Q."/>
            <person name="Zimmer A.R."/>
            <person name="Rosenthal A."/>
            <person name="Birren B.W."/>
            <person name="Platzer M."/>
            <person name="Shimizu N."/>
            <person name="Lander E.S."/>
        </authorList>
    </citation>
    <scope>NUCLEOTIDE SEQUENCE [LARGE SCALE GENOMIC DNA]</scope>
</reference>
<reference key="7">
    <citation type="journal article" date="2004" name="Genome Res.">
        <title>The status, quality, and expansion of the NIH full-length cDNA project: the Mammalian Gene Collection (MGC).</title>
        <authorList>
            <consortium name="The MGC Project Team"/>
        </authorList>
    </citation>
    <scope>NUCLEOTIDE SEQUENCE [LARGE SCALE MRNA] (ISOFORM 1)</scope>
    <source>
        <tissue>Colon</tissue>
        <tissue>Lung</tissue>
    </source>
</reference>
<reference key="8">
    <citation type="journal article" date="2007" name="BMC Genomics">
        <title>The full-ORF clone resource of the German cDNA consortium.</title>
        <authorList>
            <person name="Bechtel S."/>
            <person name="Rosenfelder H."/>
            <person name="Duda A."/>
            <person name="Schmidt C.P."/>
            <person name="Ernst U."/>
            <person name="Wellenreuther R."/>
            <person name="Mehrle A."/>
            <person name="Schuster C."/>
            <person name="Bahr A."/>
            <person name="Bloecker H."/>
            <person name="Heubner D."/>
            <person name="Hoerlein A."/>
            <person name="Michel G."/>
            <person name="Wedler H."/>
            <person name="Koehrer K."/>
            <person name="Ottenwaelder B."/>
            <person name="Poustka A."/>
            <person name="Wiemann S."/>
            <person name="Schupp I."/>
        </authorList>
    </citation>
    <scope>NUCLEOTIDE SEQUENCE [LARGE SCALE MRNA] OF 24-261 (ISOFORM 2)</scope>
</reference>
<reference key="9">
    <citation type="journal article" date="2006" name="Nat. Biotechnol.">
        <title>A probability-based approach for high-throughput protein phosphorylation analysis and site localization.</title>
        <authorList>
            <person name="Beausoleil S.A."/>
            <person name="Villen J."/>
            <person name="Gerber S.A."/>
            <person name="Rush J."/>
            <person name="Gygi S.P."/>
        </authorList>
    </citation>
    <scope>IDENTIFICATION BY MASS SPECTROMETRY [LARGE SCALE ANALYSIS]</scope>
    <source>
        <tissue>Cervix carcinoma</tissue>
    </source>
</reference>
<reference key="10">
    <citation type="journal article" date="2008" name="Proc. Natl. Acad. Sci. U.S.A.">
        <title>A quantitative atlas of mitotic phosphorylation.</title>
        <authorList>
            <person name="Dephoure N."/>
            <person name="Zhou C."/>
            <person name="Villen J."/>
            <person name="Beausoleil S.A."/>
            <person name="Bakalarski C.E."/>
            <person name="Elledge S.J."/>
            <person name="Gygi S.P."/>
        </authorList>
    </citation>
    <scope>PHOSPHORYLATION [LARGE SCALE ANALYSIS] AT SER-373</scope>
    <scope>IDENTIFICATION BY MASS SPECTROMETRY [LARGE SCALE ANALYSIS]</scope>
    <source>
        <tissue>Cervix carcinoma</tissue>
    </source>
</reference>
<reference key="11">
    <citation type="journal article" date="2009" name="Anal. Chem.">
        <title>Lys-N and trypsin cover complementary parts of the phosphoproteome in a refined SCX-based approach.</title>
        <authorList>
            <person name="Gauci S."/>
            <person name="Helbig A.O."/>
            <person name="Slijper M."/>
            <person name="Krijgsveld J."/>
            <person name="Heck A.J."/>
            <person name="Mohammed S."/>
        </authorList>
    </citation>
    <scope>ACETYLATION [LARGE SCALE ANALYSIS] AT ALA-2</scope>
    <scope>CLEAVAGE OF INITIATOR METHIONINE [LARGE SCALE ANALYSIS]</scope>
    <scope>IDENTIFICATION BY MASS SPECTROMETRY [LARGE SCALE ANALYSIS]</scope>
</reference>
<reference key="12">
    <citation type="journal article" date="2010" name="Sci. Signal.">
        <title>Quantitative phosphoproteomics reveals widespread full phosphorylation site occupancy during mitosis.</title>
        <authorList>
            <person name="Olsen J.V."/>
            <person name="Vermeulen M."/>
            <person name="Santamaria A."/>
            <person name="Kumar C."/>
            <person name="Miller M.L."/>
            <person name="Jensen L.J."/>
            <person name="Gnad F."/>
            <person name="Cox J."/>
            <person name="Jensen T.S."/>
            <person name="Nigg E.A."/>
            <person name="Brunak S."/>
            <person name="Mann M."/>
        </authorList>
    </citation>
    <scope>PHOSPHORYLATION [LARGE SCALE ANALYSIS] AT SER-373</scope>
    <scope>IDENTIFICATION BY MASS SPECTROMETRY [LARGE SCALE ANALYSIS]</scope>
    <source>
        <tissue>Cervix carcinoma</tissue>
    </source>
</reference>
<reference key="13">
    <citation type="journal article" date="2011" name="BMC Syst. Biol.">
        <title>Initial characterization of the human central proteome.</title>
        <authorList>
            <person name="Burkard T.R."/>
            <person name="Planyavsky M."/>
            <person name="Kaupe I."/>
            <person name="Breitwieser F.P."/>
            <person name="Buerckstuemmer T."/>
            <person name="Bennett K.L."/>
            <person name="Superti-Furga G."/>
            <person name="Colinge J."/>
        </authorList>
    </citation>
    <scope>IDENTIFICATION BY MASS SPECTROMETRY [LARGE SCALE ANALYSIS]</scope>
</reference>
<reference key="14">
    <citation type="journal article" date="2011" name="Sci. Signal.">
        <title>System-wide temporal characterization of the proteome and phosphoproteome of human embryonic stem cell differentiation.</title>
        <authorList>
            <person name="Rigbolt K.T."/>
            <person name="Prokhorova T.A."/>
            <person name="Akimov V."/>
            <person name="Henningsen J."/>
            <person name="Johansen P.T."/>
            <person name="Kratchmarova I."/>
            <person name="Kassem M."/>
            <person name="Mann M."/>
            <person name="Olsen J.V."/>
            <person name="Blagoev B."/>
        </authorList>
    </citation>
    <scope>IDENTIFICATION BY MASS SPECTROMETRY [LARGE SCALE ANALYSIS]</scope>
</reference>
<reference key="15">
    <citation type="journal article" date="2023" name="Life. Sci Alliance">
        <title>N-terminal proteoforms may engage in different protein complexes.</title>
        <authorList>
            <person name="Bogaert A."/>
            <person name="Fijalkowska D."/>
            <person name="Staes A."/>
            <person name="Van de Steene T."/>
            <person name="Vuylsteke M."/>
            <person name="Stadler C."/>
            <person name="Eyckerman S."/>
            <person name="Spirohn K."/>
            <person name="Hao T."/>
            <person name="Calderwood M.A."/>
            <person name="Gevaert K."/>
        </authorList>
    </citation>
    <scope>IDENTIFICATION BY MASS SPECTROMETRY (ISOFORM 3)</scope>
    <scope>CLEAVAGE OF INITIATOR METHIONINE (ISOFORMS 1 AND 3)</scope>
    <scope>ACETYLATION AT ALA-2 (ISOFORMS 1 AND 3)</scope>
</reference>
<reference key="16">
    <citation type="journal article" date="2001" name="Proc. Natl. Acad. Sci. U.S.A.">
        <title>The crystal structure of human protein farnesyltransferase reveals the basis for inhibition by CaaX tetrapeptides and their mimetics.</title>
        <authorList>
            <person name="Long S.B."/>
            <person name="Hancock P.J."/>
            <person name="Kral A.M."/>
            <person name="Hellinga H.W."/>
            <person name="Beese L.S."/>
        </authorList>
    </citation>
    <scope>X-RAY CRYSTALLOGRAPHY (2.3 ANGSTROMS) IN COMPLEX WITH FNTB</scope>
    <scope>SUBUNIT</scope>
</reference>
<reference key="17">
    <citation type="journal article" date="2002" name="J. Med. Chem.">
        <title>3-aminopyrrolidinone farnesyltransferase inhibitors: design of macrocyclic compounds with improved pharmacokinetics and excellent cell potency.</title>
        <authorList>
            <person name="Bell I.M."/>
            <person name="Gallicchio S.N."/>
            <person name="Abrams M."/>
            <person name="Beese L.S."/>
            <person name="Beshore D.C."/>
            <person name="Bhimnathwala H."/>
            <person name="Bogusky M.J."/>
            <person name="Buser C.A."/>
            <person name="Culberson J.C."/>
            <person name="Davide J."/>
            <person name="Ellis-Hutchings M."/>
            <person name="Fernandes C."/>
            <person name="Gibbs J.B."/>
            <person name="Graham S.L."/>
            <person name="Hamilton K.A."/>
            <person name="Hartman G.D."/>
            <person name="Heimbrook D.C."/>
            <person name="Homnick C.F."/>
            <person name="Huber H.E."/>
            <person name="Huff J.R."/>
            <person name="Kassahun K."/>
            <person name="Koblan K.S."/>
            <person name="Kohl N.E."/>
            <person name="Lobell R.B."/>
            <person name="Lynch J.J. Jr."/>
            <person name="Robinson R."/>
            <person name="Rodrigues A.D."/>
            <person name="Taylor J.S."/>
            <person name="Walsh E.S."/>
            <person name="Williams T.M."/>
            <person name="Zartman C.B."/>
        </authorList>
    </citation>
    <scope>X-RAY CRYSTALLOGRAPHY (2.0 ANGSTROMS) IN COMPLEX WITH FNTB</scope>
    <scope>SUBUNIT</scope>
    <scope>FUNCTION</scope>
    <scope>CATALYTIC ACTIVITY</scope>
</reference>
<reference key="18">
    <citation type="journal article" date="2003" name="J. Med. Chem.">
        <title>Dual protein farnesyltransferase-geranylgeranyltransferase-I inhibitors as potential cancer chemotherapeutic agents.</title>
        <authorList>
            <person name="deSolms S.J."/>
            <person name="Ciccarone T.M."/>
            <person name="MacTough S.C."/>
            <person name="Shaw A.W."/>
            <person name="Buser C.A."/>
            <person name="Ellis-Hutchings M."/>
            <person name="Fernandes C."/>
            <person name="Hamilton K.A."/>
            <person name="Huber H.E."/>
            <person name="Kohl N.E."/>
            <person name="Lobell R.B."/>
            <person name="Robinson R.G."/>
            <person name="Tsou N.N."/>
            <person name="Walsh E.S."/>
            <person name="Graham S.L."/>
            <person name="Beese L.S."/>
            <person name="Taylor J.S."/>
        </authorList>
    </citation>
    <scope>X-RAY CRYSTALLOGRAPHY (2.0 ANGSTROMS) IN COMPLEX WITH FNTB</scope>
    <scope>SUBUNIT</scope>
    <scope>FUNCTION</scope>
    <scope>CATALYTIC ACTIVITY</scope>
</reference>
<reference key="19">
    <citation type="journal article" date="2004" name="Biochemistry">
        <title>Crystal structures of the anticancer clinical candidates R115777 (Tipifarnib) and BMS-214662 complexed with protein farnesyltransferase suggest a mechanism of FTI selectivity.</title>
        <authorList>
            <person name="Reid T.S."/>
            <person name="Beese L.S."/>
        </authorList>
    </citation>
    <scope>X-RAY CRYSTALLOGRAPHY (2.10 ANGSTROMS) IN COMPLEX WITH FNTB</scope>
    <scope>SUBUNIT</scope>
</reference>
<reference key="20">
    <citation type="journal article" date="2004" name="J. Mol. Biol.">
        <title>Crystallographic analysis of CaaX prenyltransferases complexed with substrates defines rules of protein substrate selectivity.</title>
        <authorList>
            <person name="Reid T.S."/>
            <person name="Terry K.L."/>
            <person name="Casey P.J."/>
            <person name="Beese L.S."/>
        </authorList>
    </citation>
    <scope>X-RAY CRYSTALLOGRAPHY (1.80 ANGSTROMS) IN COMPLEX WITH FNTB</scope>
    <scope>SUBUNIT</scope>
</reference>
<reference key="21">
    <citation type="journal article" date="2006" name="Biochemistry">
        <title>Conversion of protein farnesyltransferase to a geranylgeranyltransferase.</title>
        <authorList>
            <person name="Terry K.L."/>
            <person name="Casey P.J."/>
            <person name="Beese L.S."/>
        </authorList>
    </citation>
    <scope>X-RAY CRYSTALLOGRAPHY (1.50 ANGSTROMS) IN COMPLEX WITH FNTB</scope>
    <scope>FUNCTION</scope>
    <scope>SUBUNIT</scope>
    <scope>CATALYTIC ACTIVITY</scope>
</reference>
<reference key="22">
    <citation type="journal article" date="2009" name="Chem. Biol.">
        <title>Structural basis for binding and selectivity of antimalarial and anticancer ethylenediamine inhibitors to protein farnesyltransferase.</title>
        <authorList>
            <person name="Hast M.A."/>
            <person name="Fletcher S."/>
            <person name="Cummings C.G."/>
            <person name="Pusateri E.E."/>
            <person name="Blaskovich M.A."/>
            <person name="Rivas K."/>
            <person name="Gelb M.H."/>
            <person name="Van Voorhis W.C."/>
            <person name="Sebti S.M."/>
            <person name="Hamilton A.D."/>
            <person name="Beese L.S."/>
        </authorList>
    </citation>
    <scope>X-RAY CRYSTALLOGRAPHY (1.80 ANGSTROMS) OF 1-379 IN COMPLEX WITH FNTB</scope>
    <scope>SUBUNIT</scope>
    <scope>FUNCTION</scope>
    <scope>CATALYTIC ACTIVITY</scope>
</reference>
<comment type="function">
    <text evidence="6 7 10 11 13 14">Essential subunit of both the farnesyltransferase and the geranylgeranyltransferase complex. Contributes to the transfer of a farnesyl or geranylgeranyl moiety from farnesyl or geranylgeranyl diphosphate to a cysteine at the fourth position from the C-terminus of several proteins having the C-terminal sequence Cys-aliphatic-aliphatic-X. May positively regulate neuromuscular junction development downstream of MUSK via its function in RAC1 prenylation and activation.</text>
</comment>
<comment type="catalytic activity">
    <reaction evidence="6 7 10 11 13 14">
        <text>L-cysteinyl-[protein] + (2E,6E)-farnesyl diphosphate = S-(2E,6E)-farnesyl-L-cysteinyl-[protein] + diphosphate</text>
        <dbReference type="Rhea" id="RHEA:13345"/>
        <dbReference type="Rhea" id="RHEA-COMP:10131"/>
        <dbReference type="Rhea" id="RHEA-COMP:11535"/>
        <dbReference type="ChEBI" id="CHEBI:29950"/>
        <dbReference type="ChEBI" id="CHEBI:33019"/>
        <dbReference type="ChEBI" id="CHEBI:86019"/>
        <dbReference type="ChEBI" id="CHEBI:175763"/>
        <dbReference type="EC" id="2.5.1.58"/>
    </reaction>
</comment>
<comment type="catalytic activity">
    <reaction evidence="10">
        <text>geranylgeranyl diphosphate + L-cysteinyl-[protein] = S-geranylgeranyl-L-cysteinyl-[protein] + diphosphate</text>
        <dbReference type="Rhea" id="RHEA:21240"/>
        <dbReference type="Rhea" id="RHEA-COMP:10131"/>
        <dbReference type="Rhea" id="RHEA-COMP:11537"/>
        <dbReference type="ChEBI" id="CHEBI:29950"/>
        <dbReference type="ChEBI" id="CHEBI:33019"/>
        <dbReference type="ChEBI" id="CHEBI:57533"/>
        <dbReference type="ChEBI" id="CHEBI:86021"/>
        <dbReference type="EC" id="2.5.1.59"/>
    </reaction>
</comment>
<comment type="cofactor">
    <cofactor evidence="1">
        <name>Mg(2+)</name>
        <dbReference type="ChEBI" id="CHEBI:18420"/>
    </cofactor>
</comment>
<comment type="activity regulation">
    <text evidence="3">Activated by the AGRIN-induced phosphorylation which is mediated by MUSK.</text>
</comment>
<comment type="subunit">
    <text evidence="2 5 6 7 8 9 10 11 13">Heterodimer of FNTA and FNTB (farnesyltransferase) (PubMed:11687658, PubMed:12036349, PubMed:12825937, PubMed:15170324, PubMed:15451670, PubMed:16893176, PubMed:19246009, PubMed:8419339). Heterodimer of FNTA and PGGT1B (geranylgeranyltransferase) (By similarity).</text>
</comment>
<comment type="interaction">
    <interactant intactId="EBI-602336">
        <id>P49354</id>
    </interactant>
    <interactant intactId="EBI-3914106">
        <id>O00189</id>
        <label>AP4M1</label>
    </interactant>
    <organismsDiffer>false</organismsDiffer>
    <experiments>3</experiments>
</comment>
<comment type="interaction">
    <interactant intactId="EBI-602336">
        <id>P49354</id>
    </interactant>
    <interactant intactId="EBI-602349">
        <id>P49356</id>
        <label>FNTB</label>
    </interactant>
    <organismsDiffer>false</organismsDiffer>
    <experiments>16</experiments>
</comment>
<comment type="interaction">
    <interactant intactId="EBI-602336">
        <id>P49354</id>
    </interactant>
    <interactant intactId="EBI-8456634">
        <id>P53609</id>
        <label>PGGT1B</label>
    </interactant>
    <organismsDiffer>false</organismsDiffer>
    <experiments>10</experiments>
</comment>
<comment type="alternative products">
    <event type="alternative splicing"/>
    <isoform>
        <id>P49354-1</id>
        <name>1</name>
        <sequence type="displayed"/>
    </isoform>
    <isoform>
        <id>P49354-2</id>
        <name>2</name>
        <sequence type="described" ref="VSP_036468"/>
    </isoform>
    <isoform>
        <id>P49354-3</id>
        <name>3</name>
        <sequence type="described" ref="VSP_062522"/>
    </isoform>
</comment>
<comment type="PTM">
    <text evidence="3">Phosphorylated. Phosphorylation is mediated by MUSK upon AGRIN stimulation and results in the activation of FNTA (By similarity).</text>
</comment>
<comment type="similarity">
    <text evidence="16">Belongs to the protein prenyltransferase subunit alpha family.</text>
</comment>
<organism>
    <name type="scientific">Homo sapiens</name>
    <name type="common">Human</name>
    <dbReference type="NCBI Taxonomy" id="9606"/>
    <lineage>
        <taxon>Eukaryota</taxon>
        <taxon>Metazoa</taxon>
        <taxon>Chordata</taxon>
        <taxon>Craniata</taxon>
        <taxon>Vertebrata</taxon>
        <taxon>Euteleostomi</taxon>
        <taxon>Mammalia</taxon>
        <taxon>Eutheria</taxon>
        <taxon>Euarchontoglires</taxon>
        <taxon>Primates</taxon>
        <taxon>Haplorrhini</taxon>
        <taxon>Catarrhini</taxon>
        <taxon>Hominidae</taxon>
        <taxon>Homo</taxon>
    </lineage>
</organism>
<protein>
    <recommendedName>
        <fullName>Protein farnesyltransferase/geranylgeranyltransferase type-1 subunit alpha</fullName>
        <ecNumber evidence="6 7 10 11 13 14">2.5.1.58</ecNumber>
        <ecNumber evidence="10">2.5.1.59</ecNumber>
    </recommendedName>
    <alternativeName>
        <fullName>CAAX farnesyltransferase subunit alpha</fullName>
    </alternativeName>
    <alternativeName>
        <fullName>FTase-alpha</fullName>
    </alternativeName>
    <alternativeName>
        <fullName>Ras proteins prenyltransferase subunit alpha</fullName>
    </alternativeName>
    <alternativeName>
        <fullName>Type I protein geranyl-geranyltransferase subunit alpha</fullName>
        <shortName>GGTase-I-alpha</shortName>
    </alternativeName>
</protein>
<accession>P49354</accession>
<accession>A6NJW0</accession>
<accession>Q53XJ9</accession>
<accession>Q9UDC1</accession>
<gene>
    <name type="primary">FNTA</name>
</gene>
<evidence type="ECO:0000250" key="1">
    <source>
        <dbReference type="UniProtKB" id="P29703"/>
    </source>
</evidence>
<evidence type="ECO:0000250" key="2">
    <source>
        <dbReference type="UniProtKB" id="Q04631"/>
    </source>
</evidence>
<evidence type="ECO:0000250" key="3">
    <source>
        <dbReference type="UniProtKB" id="Q61239"/>
    </source>
</evidence>
<evidence type="ECO:0000256" key="4">
    <source>
        <dbReference type="SAM" id="MobiDB-lite"/>
    </source>
</evidence>
<evidence type="ECO:0000269" key="5">
    <source>
    </source>
</evidence>
<evidence type="ECO:0000269" key="6">
    <source>
    </source>
</evidence>
<evidence type="ECO:0000269" key="7">
    <source>
    </source>
</evidence>
<evidence type="ECO:0000269" key="8">
    <source>
    </source>
</evidence>
<evidence type="ECO:0000269" key="9">
    <source>
    </source>
</evidence>
<evidence type="ECO:0000269" key="10">
    <source>
    </source>
</evidence>
<evidence type="ECO:0000269" key="11">
    <source>
    </source>
</evidence>
<evidence type="ECO:0000269" key="12">
    <source>
    </source>
</evidence>
<evidence type="ECO:0000269" key="13">
    <source>
    </source>
</evidence>
<evidence type="ECO:0000269" key="14">
    <source>
    </source>
</evidence>
<evidence type="ECO:0000303" key="15">
    <source>
    </source>
</evidence>
<evidence type="ECO:0000305" key="16"/>
<evidence type="ECO:0007744" key="17">
    <source>
    </source>
</evidence>
<evidence type="ECO:0007744" key="18">
    <source>
    </source>
</evidence>
<evidence type="ECO:0007744" key="19">
    <source>
    </source>
</evidence>
<evidence type="ECO:0007829" key="20">
    <source>
        <dbReference type="PDB" id="2F0Y"/>
    </source>
</evidence>
<evidence type="ECO:0007829" key="21">
    <source>
        <dbReference type="PDB" id="2H6F"/>
    </source>
</evidence>
<proteinExistence type="evidence at protein level"/>
<name>FNTA_HUMAN</name>
<keyword id="KW-0002">3D-structure</keyword>
<keyword id="KW-0007">Acetylation</keyword>
<keyword id="KW-0025">Alternative splicing</keyword>
<keyword id="KW-0460">Magnesium</keyword>
<keyword id="KW-0597">Phosphoprotein</keyword>
<keyword id="KW-0637">Prenyltransferase</keyword>
<keyword id="KW-1267">Proteomics identification</keyword>
<keyword id="KW-1185">Reference proteome</keyword>
<keyword id="KW-0677">Repeat</keyword>
<keyword id="KW-0808">Transferase</keyword>